<keyword id="KW-0975">Bacterial flagellum</keyword>
<keyword id="KW-0973">c-di-GMP</keyword>
<keyword id="KW-0547">Nucleotide-binding</keyword>
<keyword id="KW-1185">Reference proteome</keyword>
<dbReference type="EMBL" id="AE006468">
    <property type="protein sequence ID" value="AAL20713.1"/>
    <property type="molecule type" value="Genomic_DNA"/>
</dbReference>
<dbReference type="RefSeq" id="NP_460754.1">
    <property type="nucleotide sequence ID" value="NC_003197.2"/>
</dbReference>
<dbReference type="RefSeq" id="WP_000017421.1">
    <property type="nucleotide sequence ID" value="NC_003197.2"/>
</dbReference>
<dbReference type="SMR" id="Q8ZP19"/>
<dbReference type="STRING" id="99287.STM1798"/>
<dbReference type="PaxDb" id="99287-STM1798"/>
<dbReference type="DNASU" id="1253317"/>
<dbReference type="GeneID" id="1253317"/>
<dbReference type="KEGG" id="stm:STM1798"/>
<dbReference type="PATRIC" id="fig|99287.12.peg.1897"/>
<dbReference type="HOGENOM" id="CLU_086025_1_0_6"/>
<dbReference type="OMA" id="HFQRRRH"/>
<dbReference type="PhylomeDB" id="Q8ZP19"/>
<dbReference type="BioCyc" id="SENT99287:STM1798-MONOMER"/>
<dbReference type="Proteomes" id="UP000001014">
    <property type="component" value="Chromosome"/>
</dbReference>
<dbReference type="GO" id="GO:0009425">
    <property type="term" value="C:bacterial-type flagellum basal body"/>
    <property type="evidence" value="ECO:0007669"/>
    <property type="project" value="UniProtKB-SubCell"/>
</dbReference>
<dbReference type="GO" id="GO:0035438">
    <property type="term" value="F:cyclic-di-GMP binding"/>
    <property type="evidence" value="ECO:0007669"/>
    <property type="project" value="UniProtKB-UniRule"/>
</dbReference>
<dbReference type="GO" id="GO:0071973">
    <property type="term" value="P:bacterial-type flagellum-dependent cell motility"/>
    <property type="evidence" value="ECO:0007669"/>
    <property type="project" value="UniProtKB-UniRule"/>
</dbReference>
<dbReference type="GO" id="GO:0071945">
    <property type="term" value="P:regulation of bacterial-type flagellum-dependent cell motility by regulation of motor speed"/>
    <property type="evidence" value="ECO:0000316"/>
    <property type="project" value="UniProtKB"/>
</dbReference>
<dbReference type="FunFam" id="2.30.110.10:FF:000008">
    <property type="entry name" value="Flagellar brake protein YcgR"/>
    <property type="match status" value="1"/>
</dbReference>
<dbReference type="FunFam" id="2.40.10.220:FF:000002">
    <property type="entry name" value="Flagellar brake protein YcgR"/>
    <property type="match status" value="1"/>
</dbReference>
<dbReference type="Gene3D" id="2.30.110.10">
    <property type="entry name" value="Electron Transport, Fmn-binding Protein, Chain A"/>
    <property type="match status" value="1"/>
</dbReference>
<dbReference type="Gene3D" id="2.40.10.220">
    <property type="entry name" value="predicted glycosyltransferase like domains"/>
    <property type="match status" value="1"/>
</dbReference>
<dbReference type="HAMAP" id="MF_01457">
    <property type="entry name" value="YcgR"/>
    <property type="match status" value="1"/>
</dbReference>
<dbReference type="InterPro" id="IPR009875">
    <property type="entry name" value="PilZ_domain"/>
</dbReference>
<dbReference type="InterPro" id="IPR012349">
    <property type="entry name" value="Split_barrel_FMN-bd"/>
</dbReference>
<dbReference type="InterPro" id="IPR023787">
    <property type="entry name" value="T3SS_YcgR"/>
</dbReference>
<dbReference type="InterPro" id="IPR009926">
    <property type="entry name" value="T3SS_YcgR_PilZN"/>
</dbReference>
<dbReference type="Pfam" id="PF07238">
    <property type="entry name" value="PilZ"/>
    <property type="match status" value="1"/>
</dbReference>
<dbReference type="Pfam" id="PF07317">
    <property type="entry name" value="PilZN"/>
    <property type="match status" value="1"/>
</dbReference>
<proteinExistence type="evidence at protein level"/>
<sequence length="244" mass="27668">MSGYNEQFLKKNPLAILGVLRDLNKNQVPLRISWAHGQFISKILAVDPEKLIVDYGSQEYENSAVLRAGQVAIIAETQGAKVEFTLPQLVTGEYQRLPAFITPLPSSLWFVQRREYFRIGAPLYPPYYGVTTLPDTRTLRFRLFDLSLGGMGALLESAIPDGLIEGARFSQVELNMGQWGIFHVDAQLISISERKVIDGKNETITTPRLSFRFLNVSPAVERELQRIIFSLEREARERANKVRE</sequence>
<feature type="chain" id="PRO_0000395283" description="Flagellar brake protein YcgR">
    <location>
        <begin position="1"/>
        <end position="244"/>
    </location>
</feature>
<feature type="domain" description="PilZ">
    <location>
        <begin position="112"/>
        <end position="230"/>
    </location>
</feature>
<feature type="mutagenesis site" description="Suppresses a yhjH disruption mutant upon overexpression, binds FliM but no longer affects motility in this assay." evidence="2 3">
    <original>R</original>
    <variation>D</variation>
    <location>
        <position position="118"/>
    </location>
</feature>
<feature type="mutagenesis site" description="No localization with flagellar basal body, thus no binding to FliM." evidence="3">
    <original>E</original>
    <variation>W</variation>
    <location>
        <position position="223"/>
    </location>
</feature>
<protein>
    <recommendedName>
        <fullName>Flagellar brake protein YcgR</fullName>
    </recommendedName>
    <alternativeName>
        <fullName>Cyclic di-GMP binding protein YcgR</fullName>
    </alternativeName>
</protein>
<name>YCGR_SALTY</name>
<gene>
    <name type="primary">ycgR</name>
    <name type="ordered locus">STM1798</name>
</gene>
<comment type="function">
    <text evidence="2">Acts as a flagellar brake, regulating swimming and swarming in a bis-(3'-5') cyclic diguanylic acid (c-di-GMP)-dependent manner. Overexpression of this gene decreases swimming and swarming motility; those cells that are motile turn predominantly counterclockwise. The D-118 mutant is still able to bind FliM but no longer affects motility upon overexpression. Binds 1 c-di-GMP dimer per subunit.</text>
</comment>
<comment type="subunit">
    <text evidence="1">Monomer. Interacts with the flagellar basal bodies (By similarity).</text>
</comment>
<comment type="subcellular location">
    <subcellularLocation>
        <location evidence="3">Bacterial flagellum basal body</location>
    </subcellularLocation>
    <text>Localization lost in FliM mutants E-155 or E-160.</text>
</comment>
<comment type="domain">
    <text>The N-terminal domain is involved in FliG binding, the C-terminal domain is involved in FliM binding.</text>
</comment>
<comment type="disruption phenotype">
    <text evidence="2 3">No visible motility phenotype. Disruption of this gene suppresses the reduced motility of a yhjH disruption, thus the double knockout is motile. Overexpression of this gene in a yhjH disruption has the converse effect, i.e. it reduces motility further.</text>
</comment>
<comment type="similarity">
    <text evidence="4">Belongs to the YcgR family.</text>
</comment>
<evidence type="ECO:0000250" key="1"/>
<evidence type="ECO:0000269" key="2">
    <source>
    </source>
</evidence>
<evidence type="ECO:0000269" key="3">
    <source>
    </source>
</evidence>
<evidence type="ECO:0000305" key="4"/>
<organism>
    <name type="scientific">Salmonella typhimurium (strain LT2 / SGSC1412 / ATCC 700720)</name>
    <dbReference type="NCBI Taxonomy" id="99287"/>
    <lineage>
        <taxon>Bacteria</taxon>
        <taxon>Pseudomonadati</taxon>
        <taxon>Pseudomonadota</taxon>
        <taxon>Gammaproteobacteria</taxon>
        <taxon>Enterobacterales</taxon>
        <taxon>Enterobacteriaceae</taxon>
        <taxon>Salmonella</taxon>
    </lineage>
</organism>
<reference key="1">
    <citation type="journal article" date="2001" name="Nature">
        <title>Complete genome sequence of Salmonella enterica serovar Typhimurium LT2.</title>
        <authorList>
            <person name="McClelland M."/>
            <person name="Sanderson K.E."/>
            <person name="Spieth J."/>
            <person name="Clifton S.W."/>
            <person name="Latreille P."/>
            <person name="Courtney L."/>
            <person name="Porwollik S."/>
            <person name="Ali J."/>
            <person name="Dante M."/>
            <person name="Du F."/>
            <person name="Hou S."/>
            <person name="Layman D."/>
            <person name="Leonard S."/>
            <person name="Nguyen C."/>
            <person name="Scott K."/>
            <person name="Holmes A."/>
            <person name="Grewal N."/>
            <person name="Mulvaney E."/>
            <person name="Ryan E."/>
            <person name="Sun H."/>
            <person name="Florea L."/>
            <person name="Miller W."/>
            <person name="Stoneking T."/>
            <person name="Nhan M."/>
            <person name="Waterston R."/>
            <person name="Wilson R.K."/>
        </authorList>
    </citation>
    <scope>NUCLEOTIDE SEQUENCE [LARGE SCALE GENOMIC DNA]</scope>
    <source>
        <strain>LT2 / SGSC1412 / ATCC 700720</strain>
    </source>
</reference>
<reference key="2">
    <citation type="journal article" date="2006" name="J. Biol. Chem.">
        <title>The PilZ domain is a receptor for the second messenger c-di-GMP: the PilZ domain protein YcgR controls motility in enterobacteria.</title>
        <authorList>
            <person name="Ryjenkov D.A."/>
            <person name="Simm R."/>
            <person name="Romling U."/>
            <person name="Gomelsky M."/>
        </authorList>
    </citation>
    <scope>FUNCTION IN MOTILITY</scope>
    <scope>MUTAGENESIS OF ARG-118</scope>
    <scope>DISRUPTION PHENOTYPE</scope>
    <source>
        <strain>ATCC 14028 / SGSC 2980 / CDC 6516-60 / NCTC 12023</strain>
    </source>
</reference>
<reference key="3">
    <citation type="journal article" date="2010" name="Mol. Cell">
        <title>The c-di-GMP binding protein YcgR controls flagellar motor direction and speed to affect chemotaxis by a 'backstop brake' mechanism.</title>
        <authorList>
            <person name="Paul K."/>
            <person name="Nieto V."/>
            <person name="Carlquist W.C."/>
            <person name="Blair D.F."/>
            <person name="Harshey R.M."/>
        </authorList>
    </citation>
    <scope>MUTAGENESIS OF ARG-118 AND GLU-223</scope>
    <scope>SUBCELLULAR LOCATION</scope>
    <scope>OVEREXPRESSION</scope>
    <scope>DISRUPTION PHENOTYPE</scope>
    <source>
        <strain>ATCC 14028 / SGSC 2980 / CDC 6516-60 / NCTC 12023</strain>
    </source>
</reference>
<accession>Q8ZP19</accession>